<proteinExistence type="inferred from homology"/>
<comment type="catalytic activity">
    <reaction evidence="1">
        <text>aldehydo-D-galactose 6-phosphate = keto-D-tagatose 6-phosphate</text>
        <dbReference type="Rhea" id="RHEA:13033"/>
        <dbReference type="ChEBI" id="CHEBI:58255"/>
        <dbReference type="ChEBI" id="CHEBI:134283"/>
        <dbReference type="EC" id="5.3.1.26"/>
    </reaction>
</comment>
<comment type="pathway">
    <text evidence="1">Carbohydrate metabolism; D-galactose 6-phosphate degradation; D-tagatose 6-phosphate from D-galactose 6-phosphate: step 1/1.</text>
</comment>
<comment type="subunit">
    <text evidence="1">Heteromultimeric protein consisting of LacA and LacB.</text>
</comment>
<comment type="similarity">
    <text evidence="1">Belongs to the LacAB/RpiB family.</text>
</comment>
<accession>Q2G2R4</accession>
<accession>P26594</accession>
<sequence length="142" mass="15395">MAIIIGSDEAGKRLKEVIKSYLLDNKYDVVDVTEGQEVDFVDATLAVAKDVQSQEGNLGIVIDAFGAGSFMVATKIKGMIAAEVSDERSGYMTRGHNNSRMITMGSEIVGDTLAKNVVKGFVEGKYDGGRHQIRVDMLNKMC</sequence>
<protein>
    <recommendedName>
        <fullName evidence="1">Galactose-6-phosphate isomerase subunit LacA</fullName>
        <ecNumber evidence="1">5.3.1.26</ecNumber>
    </recommendedName>
</protein>
<gene>
    <name evidence="1" type="primary">lacA</name>
    <name type="ordered locus">SAOUHSC_02455</name>
</gene>
<name>LACA_STAA8</name>
<organism>
    <name type="scientific">Staphylococcus aureus (strain NCTC 8325 / PS 47)</name>
    <dbReference type="NCBI Taxonomy" id="93061"/>
    <lineage>
        <taxon>Bacteria</taxon>
        <taxon>Bacillati</taxon>
        <taxon>Bacillota</taxon>
        <taxon>Bacilli</taxon>
        <taxon>Bacillales</taxon>
        <taxon>Staphylococcaceae</taxon>
        <taxon>Staphylococcus</taxon>
    </lineage>
</organism>
<reference key="1">
    <citation type="book" date="2006" name="Gram positive pathogens, 2nd edition">
        <title>The Staphylococcus aureus NCTC 8325 genome.</title>
        <editorList>
            <person name="Fischetti V."/>
            <person name="Novick R."/>
            <person name="Ferretti J."/>
            <person name="Portnoy D."/>
            <person name="Rood J."/>
        </editorList>
        <authorList>
            <person name="Gillaspy A.F."/>
            <person name="Worrell V."/>
            <person name="Orvis J."/>
            <person name="Roe B.A."/>
            <person name="Dyer D.W."/>
            <person name="Iandolo J.J."/>
        </authorList>
    </citation>
    <scope>NUCLEOTIDE SEQUENCE [LARGE SCALE GENOMIC DNA]</scope>
    <source>
        <strain>NCTC 8325 / PS 47</strain>
    </source>
</reference>
<reference key="2">
    <citation type="journal article" date="1990" name="J. Bacteriol.">
        <title>Repression and catabolite repression of the lactose operon of Staphylococcus aureus.</title>
        <authorList>
            <person name="Oskouian B."/>
            <person name="Stewart G.C."/>
        </authorList>
    </citation>
    <scope>NUCLEOTIDE SEQUENCE [GENOMIC DNA] OF 1-63</scope>
</reference>
<keyword id="KW-0413">Isomerase</keyword>
<keyword id="KW-0423">Lactose metabolism</keyword>
<keyword id="KW-1185">Reference proteome</keyword>
<dbReference type="EC" id="5.3.1.26" evidence="1"/>
<dbReference type="EMBL" id="CP000253">
    <property type="protein sequence ID" value="ABD31475.1"/>
    <property type="molecule type" value="Genomic_DNA"/>
</dbReference>
<dbReference type="EMBL" id="M32103">
    <property type="protein sequence ID" value="AAA67855.1"/>
    <property type="molecule type" value="Genomic_DNA"/>
</dbReference>
<dbReference type="PIR" id="A38158">
    <property type="entry name" value="A38158"/>
</dbReference>
<dbReference type="RefSeq" id="WP_000974608.1">
    <property type="nucleotide sequence ID" value="NZ_LS483365.1"/>
</dbReference>
<dbReference type="RefSeq" id="YP_500922.1">
    <property type="nucleotide sequence ID" value="NC_007795.1"/>
</dbReference>
<dbReference type="SMR" id="Q2G2R4"/>
<dbReference type="STRING" id="93061.SAOUHSC_02455"/>
<dbReference type="PaxDb" id="1280-SAXN108_2448"/>
<dbReference type="GeneID" id="3919018"/>
<dbReference type="GeneID" id="98347039"/>
<dbReference type="KEGG" id="sao:SAOUHSC_02455"/>
<dbReference type="PATRIC" id="fig|93061.5.peg.2214"/>
<dbReference type="eggNOG" id="COG0698">
    <property type="taxonomic scope" value="Bacteria"/>
</dbReference>
<dbReference type="HOGENOM" id="CLU_091396_4_2_9"/>
<dbReference type="OrthoDB" id="1778624at2"/>
<dbReference type="UniPathway" id="UPA00702">
    <property type="reaction ID" value="UER00714"/>
</dbReference>
<dbReference type="PRO" id="PR:Q2G2R4"/>
<dbReference type="Proteomes" id="UP000008816">
    <property type="component" value="Chromosome"/>
</dbReference>
<dbReference type="GO" id="GO:0050044">
    <property type="term" value="F:galactose-6-phosphate isomerase activity"/>
    <property type="evidence" value="ECO:0007669"/>
    <property type="project" value="UniProtKB-UniRule"/>
</dbReference>
<dbReference type="GO" id="GO:0004751">
    <property type="term" value="F:ribose-5-phosphate isomerase activity"/>
    <property type="evidence" value="ECO:0000318"/>
    <property type="project" value="GO_Central"/>
</dbReference>
<dbReference type="GO" id="GO:0019316">
    <property type="term" value="P:D-allose catabolic process"/>
    <property type="evidence" value="ECO:0000318"/>
    <property type="project" value="GO_Central"/>
</dbReference>
<dbReference type="GO" id="GO:0019388">
    <property type="term" value="P:galactose catabolic process"/>
    <property type="evidence" value="ECO:0007669"/>
    <property type="project" value="UniProtKB-UniPathway"/>
</dbReference>
<dbReference type="GO" id="GO:0019512">
    <property type="term" value="P:lactose catabolic process via tagatose-6-phosphate"/>
    <property type="evidence" value="ECO:0007669"/>
    <property type="project" value="UniProtKB-UniRule"/>
</dbReference>
<dbReference type="GO" id="GO:0009052">
    <property type="term" value="P:pentose-phosphate shunt, non-oxidative branch"/>
    <property type="evidence" value="ECO:0000318"/>
    <property type="project" value="GO_Central"/>
</dbReference>
<dbReference type="Gene3D" id="3.40.1400.10">
    <property type="entry name" value="Sugar-phosphate isomerase, RpiB/LacA/LacB"/>
    <property type="match status" value="1"/>
</dbReference>
<dbReference type="HAMAP" id="MF_01555">
    <property type="entry name" value="LacA"/>
    <property type="match status" value="1"/>
</dbReference>
<dbReference type="InterPro" id="IPR004783">
    <property type="entry name" value="LacA"/>
</dbReference>
<dbReference type="InterPro" id="IPR003500">
    <property type="entry name" value="RpiB_LacA_LacB"/>
</dbReference>
<dbReference type="InterPro" id="IPR036569">
    <property type="entry name" value="RpiB_LacA_LacB_sf"/>
</dbReference>
<dbReference type="NCBIfam" id="TIGR01118">
    <property type="entry name" value="lacA"/>
    <property type="match status" value="1"/>
</dbReference>
<dbReference type="NCBIfam" id="NF006380">
    <property type="entry name" value="PRK08621.1"/>
    <property type="match status" value="1"/>
</dbReference>
<dbReference type="NCBIfam" id="TIGR00689">
    <property type="entry name" value="rpiB_lacA_lacB"/>
    <property type="match status" value="1"/>
</dbReference>
<dbReference type="PANTHER" id="PTHR30345:SF5">
    <property type="entry name" value="GALACTOSE-6-PHOSPHATE ISOMERASE SUBUNIT LACA"/>
    <property type="match status" value="1"/>
</dbReference>
<dbReference type="PANTHER" id="PTHR30345">
    <property type="entry name" value="RIBOSE-5-PHOSPHATE ISOMERASE B"/>
    <property type="match status" value="1"/>
</dbReference>
<dbReference type="Pfam" id="PF02502">
    <property type="entry name" value="LacAB_rpiB"/>
    <property type="match status" value="1"/>
</dbReference>
<dbReference type="PIRSF" id="PIRSF005384">
    <property type="entry name" value="RpiB_LacA_B"/>
    <property type="match status" value="1"/>
</dbReference>
<dbReference type="SUPFAM" id="SSF89623">
    <property type="entry name" value="Ribose/Galactose isomerase RpiB/AlsB"/>
    <property type="match status" value="1"/>
</dbReference>
<evidence type="ECO:0000255" key="1">
    <source>
        <dbReference type="HAMAP-Rule" id="MF_01555"/>
    </source>
</evidence>
<feature type="chain" id="PRO_0000247669" description="Galactose-6-phosphate isomerase subunit LacA">
    <location>
        <begin position="1"/>
        <end position="142"/>
    </location>
</feature>